<evidence type="ECO:0000255" key="1">
    <source>
        <dbReference type="HAMAP-Rule" id="MF_00689"/>
    </source>
</evidence>
<feature type="chain" id="PRO_1000045133" description="Aspartate/glutamate leucyltransferase">
    <location>
        <begin position="1"/>
        <end position="236"/>
    </location>
</feature>
<comment type="function">
    <text evidence="1">Functions in the N-end rule pathway of protein degradation where it conjugates Leu from its aminoacyl-tRNA to the N-termini of proteins containing an N-terminal aspartate or glutamate.</text>
</comment>
<comment type="catalytic activity">
    <reaction evidence="1">
        <text>N-terminal L-glutamyl-[protein] + L-leucyl-tRNA(Leu) = N-terminal L-leucyl-L-glutamyl-[protein] + tRNA(Leu) + H(+)</text>
        <dbReference type="Rhea" id="RHEA:50412"/>
        <dbReference type="Rhea" id="RHEA-COMP:9613"/>
        <dbReference type="Rhea" id="RHEA-COMP:9622"/>
        <dbReference type="Rhea" id="RHEA-COMP:12664"/>
        <dbReference type="Rhea" id="RHEA-COMP:12668"/>
        <dbReference type="ChEBI" id="CHEBI:15378"/>
        <dbReference type="ChEBI" id="CHEBI:64721"/>
        <dbReference type="ChEBI" id="CHEBI:78442"/>
        <dbReference type="ChEBI" id="CHEBI:78494"/>
        <dbReference type="ChEBI" id="CHEBI:133041"/>
        <dbReference type="EC" id="2.3.2.29"/>
    </reaction>
</comment>
<comment type="catalytic activity">
    <reaction evidence="1">
        <text>N-terminal L-aspartyl-[protein] + L-leucyl-tRNA(Leu) = N-terminal L-leucyl-L-aspartyl-[protein] + tRNA(Leu) + H(+)</text>
        <dbReference type="Rhea" id="RHEA:50420"/>
        <dbReference type="Rhea" id="RHEA-COMP:9613"/>
        <dbReference type="Rhea" id="RHEA-COMP:9622"/>
        <dbReference type="Rhea" id="RHEA-COMP:12669"/>
        <dbReference type="Rhea" id="RHEA-COMP:12674"/>
        <dbReference type="ChEBI" id="CHEBI:15378"/>
        <dbReference type="ChEBI" id="CHEBI:64720"/>
        <dbReference type="ChEBI" id="CHEBI:78442"/>
        <dbReference type="ChEBI" id="CHEBI:78494"/>
        <dbReference type="ChEBI" id="CHEBI:133042"/>
        <dbReference type="EC" id="2.3.2.29"/>
    </reaction>
</comment>
<comment type="subcellular location">
    <subcellularLocation>
        <location evidence="1">Cytoplasm</location>
    </subcellularLocation>
</comment>
<comment type="similarity">
    <text evidence="1">Belongs to the R-transferase family. Bpt subfamily.</text>
</comment>
<sequence length="236" mass="27139">MSRSRITLLRTHCHECAYVSGRTARLEFLSPTLRLNDHRYQLLLEQGFRRSGPYVYRPHCPGCKACQSLRIPVARFRPRRRHRRCQRANANLHVTACPPVMTQEHLALYRRYIDHRHPRSSMANPDHAEAEGFLAAPWCTTVFYELRTEAQGSLLAVAVTDVLPDALSAVYTFYAPEAEHRGLGNLAVLWQLSEARRLGAQHLYLGYWIADAPAMAYKASFRPHEIFDGRGWRAQE</sequence>
<keyword id="KW-0012">Acyltransferase</keyword>
<keyword id="KW-0963">Cytoplasm</keyword>
<keyword id="KW-1185">Reference proteome</keyword>
<keyword id="KW-0808">Transferase</keyword>
<gene>
    <name evidence="1" type="primary">bpt</name>
    <name type="ordered locus">Hhal_1398</name>
</gene>
<dbReference type="EC" id="2.3.2.29" evidence="1"/>
<dbReference type="EMBL" id="CP000544">
    <property type="protein sequence ID" value="ABM62165.1"/>
    <property type="molecule type" value="Genomic_DNA"/>
</dbReference>
<dbReference type="RefSeq" id="WP_011814187.1">
    <property type="nucleotide sequence ID" value="NC_008789.1"/>
</dbReference>
<dbReference type="SMR" id="A1WWV3"/>
<dbReference type="STRING" id="349124.Hhal_1398"/>
<dbReference type="KEGG" id="hha:Hhal_1398"/>
<dbReference type="eggNOG" id="COG2935">
    <property type="taxonomic scope" value="Bacteria"/>
</dbReference>
<dbReference type="HOGENOM" id="CLU_077607_0_0_6"/>
<dbReference type="OrthoDB" id="9782022at2"/>
<dbReference type="Proteomes" id="UP000000647">
    <property type="component" value="Chromosome"/>
</dbReference>
<dbReference type="GO" id="GO:0005737">
    <property type="term" value="C:cytoplasm"/>
    <property type="evidence" value="ECO:0007669"/>
    <property type="project" value="UniProtKB-SubCell"/>
</dbReference>
<dbReference type="GO" id="GO:0004057">
    <property type="term" value="F:arginyl-tRNA--protein transferase activity"/>
    <property type="evidence" value="ECO:0007669"/>
    <property type="project" value="InterPro"/>
</dbReference>
<dbReference type="GO" id="GO:0008914">
    <property type="term" value="F:leucyl-tRNA--protein transferase activity"/>
    <property type="evidence" value="ECO:0007669"/>
    <property type="project" value="UniProtKB-UniRule"/>
</dbReference>
<dbReference type="GO" id="GO:0071596">
    <property type="term" value="P:ubiquitin-dependent protein catabolic process via the N-end rule pathway"/>
    <property type="evidence" value="ECO:0007669"/>
    <property type="project" value="InterPro"/>
</dbReference>
<dbReference type="HAMAP" id="MF_00689">
    <property type="entry name" value="Bpt"/>
    <property type="match status" value="1"/>
</dbReference>
<dbReference type="InterPro" id="IPR016181">
    <property type="entry name" value="Acyl_CoA_acyltransferase"/>
</dbReference>
<dbReference type="InterPro" id="IPR017138">
    <property type="entry name" value="Asp_Glu_LeuTrfase"/>
</dbReference>
<dbReference type="InterPro" id="IPR030700">
    <property type="entry name" value="N-end_Aminoacyl_Trfase"/>
</dbReference>
<dbReference type="InterPro" id="IPR007472">
    <property type="entry name" value="N-end_Aminoacyl_Trfase_C"/>
</dbReference>
<dbReference type="InterPro" id="IPR007471">
    <property type="entry name" value="N-end_Aminoacyl_Trfase_N"/>
</dbReference>
<dbReference type="NCBIfam" id="NF002341">
    <property type="entry name" value="PRK01305.1-1"/>
    <property type="match status" value="1"/>
</dbReference>
<dbReference type="NCBIfam" id="NF002342">
    <property type="entry name" value="PRK01305.1-3"/>
    <property type="match status" value="1"/>
</dbReference>
<dbReference type="NCBIfam" id="NF002346">
    <property type="entry name" value="PRK01305.2-3"/>
    <property type="match status" value="1"/>
</dbReference>
<dbReference type="PANTHER" id="PTHR21367">
    <property type="entry name" value="ARGININE-TRNA-PROTEIN TRANSFERASE 1"/>
    <property type="match status" value="1"/>
</dbReference>
<dbReference type="PANTHER" id="PTHR21367:SF1">
    <property type="entry name" value="ARGINYL-TRNA--PROTEIN TRANSFERASE 1"/>
    <property type="match status" value="1"/>
</dbReference>
<dbReference type="Pfam" id="PF04377">
    <property type="entry name" value="ATE_C"/>
    <property type="match status" value="1"/>
</dbReference>
<dbReference type="Pfam" id="PF04376">
    <property type="entry name" value="ATE_N"/>
    <property type="match status" value="1"/>
</dbReference>
<dbReference type="PIRSF" id="PIRSF037208">
    <property type="entry name" value="ATE_pro_prd"/>
    <property type="match status" value="1"/>
</dbReference>
<dbReference type="SUPFAM" id="SSF55729">
    <property type="entry name" value="Acyl-CoA N-acyltransferases (Nat)"/>
    <property type="match status" value="1"/>
</dbReference>
<reference key="1">
    <citation type="submission" date="2006-12" db="EMBL/GenBank/DDBJ databases">
        <title>Complete sequence of Halorhodospira halophila SL1.</title>
        <authorList>
            <consortium name="US DOE Joint Genome Institute"/>
            <person name="Copeland A."/>
            <person name="Lucas S."/>
            <person name="Lapidus A."/>
            <person name="Barry K."/>
            <person name="Detter J.C."/>
            <person name="Glavina del Rio T."/>
            <person name="Hammon N."/>
            <person name="Israni S."/>
            <person name="Dalin E."/>
            <person name="Tice H."/>
            <person name="Pitluck S."/>
            <person name="Saunders E."/>
            <person name="Brettin T."/>
            <person name="Bruce D."/>
            <person name="Han C."/>
            <person name="Tapia R."/>
            <person name="Schmutz J."/>
            <person name="Larimer F."/>
            <person name="Land M."/>
            <person name="Hauser L."/>
            <person name="Kyrpides N."/>
            <person name="Mikhailova N."/>
            <person name="Hoff W."/>
            <person name="Richardson P."/>
        </authorList>
    </citation>
    <scope>NUCLEOTIDE SEQUENCE [LARGE SCALE GENOMIC DNA]</scope>
    <source>
        <strain>DSM 244 / SL1</strain>
    </source>
</reference>
<name>BPT_HALHL</name>
<proteinExistence type="inferred from homology"/>
<accession>A1WWV3</accession>
<organism>
    <name type="scientific">Halorhodospira halophila (strain DSM 244 / SL1)</name>
    <name type="common">Ectothiorhodospira halophila (strain DSM 244 / SL1)</name>
    <dbReference type="NCBI Taxonomy" id="349124"/>
    <lineage>
        <taxon>Bacteria</taxon>
        <taxon>Pseudomonadati</taxon>
        <taxon>Pseudomonadota</taxon>
        <taxon>Gammaproteobacteria</taxon>
        <taxon>Chromatiales</taxon>
        <taxon>Ectothiorhodospiraceae</taxon>
        <taxon>Halorhodospira</taxon>
    </lineage>
</organism>
<protein>
    <recommendedName>
        <fullName evidence="1">Aspartate/glutamate leucyltransferase</fullName>
        <ecNumber evidence="1">2.3.2.29</ecNumber>
    </recommendedName>
</protein>